<accession>P54378</accession>
<reference key="1">
    <citation type="journal article" date="1996" name="Microbiology">
        <title>Systematic sequencing of the 283 kb 210 degrees-232 degrees region of the Bacillus subtilis genome containing the skin element and many sporulation genes.</title>
        <authorList>
            <person name="Mizuno M."/>
            <person name="Masuda S."/>
            <person name="Takemaru K."/>
            <person name="Hosono S."/>
            <person name="Sato T."/>
            <person name="Takeuchi M."/>
            <person name="Kobayashi Y."/>
        </authorList>
    </citation>
    <scope>NUCLEOTIDE SEQUENCE [GENOMIC DNA]</scope>
</reference>
<reference key="2">
    <citation type="journal article" date="1997" name="Nature">
        <title>The complete genome sequence of the Gram-positive bacterium Bacillus subtilis.</title>
        <authorList>
            <person name="Kunst F."/>
            <person name="Ogasawara N."/>
            <person name="Moszer I."/>
            <person name="Albertini A.M."/>
            <person name="Alloni G."/>
            <person name="Azevedo V."/>
            <person name="Bertero M.G."/>
            <person name="Bessieres P."/>
            <person name="Bolotin A."/>
            <person name="Borchert S."/>
            <person name="Borriss R."/>
            <person name="Boursier L."/>
            <person name="Brans A."/>
            <person name="Braun M."/>
            <person name="Brignell S.C."/>
            <person name="Bron S."/>
            <person name="Brouillet S."/>
            <person name="Bruschi C.V."/>
            <person name="Caldwell B."/>
            <person name="Capuano V."/>
            <person name="Carter N.M."/>
            <person name="Choi S.-K."/>
            <person name="Codani J.-J."/>
            <person name="Connerton I.F."/>
            <person name="Cummings N.J."/>
            <person name="Daniel R.A."/>
            <person name="Denizot F."/>
            <person name="Devine K.M."/>
            <person name="Duesterhoeft A."/>
            <person name="Ehrlich S.D."/>
            <person name="Emmerson P.T."/>
            <person name="Entian K.-D."/>
            <person name="Errington J."/>
            <person name="Fabret C."/>
            <person name="Ferrari E."/>
            <person name="Foulger D."/>
            <person name="Fritz C."/>
            <person name="Fujita M."/>
            <person name="Fujita Y."/>
            <person name="Fuma S."/>
            <person name="Galizzi A."/>
            <person name="Galleron N."/>
            <person name="Ghim S.-Y."/>
            <person name="Glaser P."/>
            <person name="Goffeau A."/>
            <person name="Golightly E.J."/>
            <person name="Grandi G."/>
            <person name="Guiseppi G."/>
            <person name="Guy B.J."/>
            <person name="Haga K."/>
            <person name="Haiech J."/>
            <person name="Harwood C.R."/>
            <person name="Henaut A."/>
            <person name="Hilbert H."/>
            <person name="Holsappel S."/>
            <person name="Hosono S."/>
            <person name="Hullo M.-F."/>
            <person name="Itaya M."/>
            <person name="Jones L.-M."/>
            <person name="Joris B."/>
            <person name="Karamata D."/>
            <person name="Kasahara Y."/>
            <person name="Klaerr-Blanchard M."/>
            <person name="Klein C."/>
            <person name="Kobayashi Y."/>
            <person name="Koetter P."/>
            <person name="Koningstein G."/>
            <person name="Krogh S."/>
            <person name="Kumano M."/>
            <person name="Kurita K."/>
            <person name="Lapidus A."/>
            <person name="Lardinois S."/>
            <person name="Lauber J."/>
            <person name="Lazarevic V."/>
            <person name="Lee S.-M."/>
            <person name="Levine A."/>
            <person name="Liu H."/>
            <person name="Masuda S."/>
            <person name="Mauel C."/>
            <person name="Medigue C."/>
            <person name="Medina N."/>
            <person name="Mellado R.P."/>
            <person name="Mizuno M."/>
            <person name="Moestl D."/>
            <person name="Nakai S."/>
            <person name="Noback M."/>
            <person name="Noone D."/>
            <person name="O'Reilly M."/>
            <person name="Ogawa K."/>
            <person name="Ogiwara A."/>
            <person name="Oudega B."/>
            <person name="Park S.-H."/>
            <person name="Parro V."/>
            <person name="Pohl T.M."/>
            <person name="Portetelle D."/>
            <person name="Porwollik S."/>
            <person name="Prescott A.M."/>
            <person name="Presecan E."/>
            <person name="Pujic P."/>
            <person name="Purnelle B."/>
            <person name="Rapoport G."/>
            <person name="Rey M."/>
            <person name="Reynolds S."/>
            <person name="Rieger M."/>
            <person name="Rivolta C."/>
            <person name="Rocha E."/>
            <person name="Roche B."/>
            <person name="Rose M."/>
            <person name="Sadaie Y."/>
            <person name="Sato T."/>
            <person name="Scanlan E."/>
            <person name="Schleich S."/>
            <person name="Schroeter R."/>
            <person name="Scoffone F."/>
            <person name="Sekiguchi J."/>
            <person name="Sekowska A."/>
            <person name="Seror S.J."/>
            <person name="Serror P."/>
            <person name="Shin B.-S."/>
            <person name="Soldo B."/>
            <person name="Sorokin A."/>
            <person name="Tacconi E."/>
            <person name="Takagi T."/>
            <person name="Takahashi H."/>
            <person name="Takemaru K."/>
            <person name="Takeuchi M."/>
            <person name="Tamakoshi A."/>
            <person name="Tanaka T."/>
            <person name="Terpstra P."/>
            <person name="Tognoni A."/>
            <person name="Tosato V."/>
            <person name="Uchiyama S."/>
            <person name="Vandenbol M."/>
            <person name="Vannier F."/>
            <person name="Vassarotti A."/>
            <person name="Viari A."/>
            <person name="Wambutt R."/>
            <person name="Wedler E."/>
            <person name="Wedler H."/>
            <person name="Weitzenegger T."/>
            <person name="Winters P."/>
            <person name="Wipat A."/>
            <person name="Yamamoto H."/>
            <person name="Yamane K."/>
            <person name="Yasumoto K."/>
            <person name="Yata K."/>
            <person name="Yoshida K."/>
            <person name="Yoshikawa H.-F."/>
            <person name="Zumstein E."/>
            <person name="Yoshikawa H."/>
            <person name="Danchin A."/>
        </authorList>
    </citation>
    <scope>NUCLEOTIDE SEQUENCE [LARGE SCALE GENOMIC DNA]</scope>
    <source>
        <strain>168</strain>
    </source>
</reference>
<reference key="3">
    <citation type="journal article" date="2009" name="Microbiology">
        <title>From a consortium sequence to a unified sequence: the Bacillus subtilis 168 reference genome a decade later.</title>
        <authorList>
            <person name="Barbe V."/>
            <person name="Cruveiller S."/>
            <person name="Kunst F."/>
            <person name="Lenoble P."/>
            <person name="Meurice G."/>
            <person name="Sekowska A."/>
            <person name="Vallenet D."/>
            <person name="Wang T."/>
            <person name="Moszer I."/>
            <person name="Medigue C."/>
            <person name="Danchin A."/>
        </authorList>
    </citation>
    <scope>SEQUENCE REVISION TO 236-237</scope>
</reference>
<evidence type="ECO:0000255" key="1">
    <source>
        <dbReference type="HAMAP-Rule" id="MF_00259"/>
    </source>
</evidence>
<evidence type="ECO:0000305" key="2"/>
<evidence type="ECO:0007829" key="3">
    <source>
        <dbReference type="PDB" id="1YX2"/>
    </source>
</evidence>
<gene>
    <name evidence="1" type="primary">gcvT</name>
    <name type="synonym">yqhI</name>
    <name type="ordered locus">BSU24570</name>
</gene>
<protein>
    <recommendedName>
        <fullName evidence="1">Aminomethyltransferase</fullName>
        <ecNumber evidence="1">2.1.2.10</ecNumber>
    </recommendedName>
    <alternativeName>
        <fullName evidence="1">Glycine cleavage system T protein</fullName>
    </alternativeName>
</protein>
<proteinExistence type="evidence at protein level"/>
<name>GCST_BACSU</name>
<comment type="function">
    <text evidence="1">The glycine cleavage system catalyzes the degradation of glycine.</text>
</comment>
<comment type="catalytic activity">
    <reaction evidence="1">
        <text>N(6)-[(R)-S(8)-aminomethyldihydrolipoyl]-L-lysyl-[protein] + (6S)-5,6,7,8-tetrahydrofolate = N(6)-[(R)-dihydrolipoyl]-L-lysyl-[protein] + (6R)-5,10-methylene-5,6,7,8-tetrahydrofolate + NH4(+)</text>
        <dbReference type="Rhea" id="RHEA:16945"/>
        <dbReference type="Rhea" id="RHEA-COMP:10475"/>
        <dbReference type="Rhea" id="RHEA-COMP:10492"/>
        <dbReference type="ChEBI" id="CHEBI:15636"/>
        <dbReference type="ChEBI" id="CHEBI:28938"/>
        <dbReference type="ChEBI" id="CHEBI:57453"/>
        <dbReference type="ChEBI" id="CHEBI:83100"/>
        <dbReference type="ChEBI" id="CHEBI:83143"/>
        <dbReference type="EC" id="2.1.2.10"/>
    </reaction>
</comment>
<comment type="subunit">
    <text evidence="1">The glycine cleavage system is composed of four proteins: P, T, L and H.</text>
</comment>
<comment type="similarity">
    <text evidence="1">Belongs to the GcvT family.</text>
</comment>
<dbReference type="EC" id="2.1.2.10" evidence="1"/>
<dbReference type="EMBL" id="D84432">
    <property type="protein sequence ID" value="BAA12546.1"/>
    <property type="molecule type" value="Genomic_DNA"/>
</dbReference>
<dbReference type="EMBL" id="AL009126">
    <property type="protein sequence ID" value="CAB14388.2"/>
    <property type="molecule type" value="Genomic_DNA"/>
</dbReference>
<dbReference type="PIR" id="H69958">
    <property type="entry name" value="H69958"/>
</dbReference>
<dbReference type="RefSeq" id="NP_390337.2">
    <property type="nucleotide sequence ID" value="NC_000964.3"/>
</dbReference>
<dbReference type="RefSeq" id="WP_004398598.1">
    <property type="nucleotide sequence ID" value="NZ_OZ025638.1"/>
</dbReference>
<dbReference type="PDB" id="1YX2">
    <property type="method" value="X-ray"/>
    <property type="resolution" value="2.08 A"/>
    <property type="chains" value="A/B=1-362"/>
</dbReference>
<dbReference type="PDBsum" id="1YX2"/>
<dbReference type="SMR" id="P54378"/>
<dbReference type="FunCoup" id="P54378">
    <property type="interactions" value="672"/>
</dbReference>
<dbReference type="STRING" id="224308.BSU24570"/>
<dbReference type="jPOST" id="P54378"/>
<dbReference type="PaxDb" id="224308-BSU24570"/>
<dbReference type="EnsemblBacteria" id="CAB14388">
    <property type="protein sequence ID" value="CAB14388"/>
    <property type="gene ID" value="BSU_24570"/>
</dbReference>
<dbReference type="GeneID" id="938547"/>
<dbReference type="KEGG" id="bsu:BSU24570"/>
<dbReference type="PATRIC" id="fig|224308.179.peg.2675"/>
<dbReference type="eggNOG" id="COG0404">
    <property type="taxonomic scope" value="Bacteria"/>
</dbReference>
<dbReference type="InParanoid" id="P54378"/>
<dbReference type="OrthoDB" id="9774591at2"/>
<dbReference type="PhylomeDB" id="P54378"/>
<dbReference type="BioCyc" id="BSUB:BSU24570-MONOMER"/>
<dbReference type="EvolutionaryTrace" id="P54378"/>
<dbReference type="Proteomes" id="UP000001570">
    <property type="component" value="Chromosome"/>
</dbReference>
<dbReference type="GO" id="GO:0005829">
    <property type="term" value="C:cytosol"/>
    <property type="evidence" value="ECO:0000318"/>
    <property type="project" value="GO_Central"/>
</dbReference>
<dbReference type="GO" id="GO:0005960">
    <property type="term" value="C:glycine cleavage complex"/>
    <property type="evidence" value="ECO:0007669"/>
    <property type="project" value="InterPro"/>
</dbReference>
<dbReference type="GO" id="GO:0004047">
    <property type="term" value="F:aminomethyltransferase activity"/>
    <property type="evidence" value="ECO:0007669"/>
    <property type="project" value="UniProtKB-UniRule"/>
</dbReference>
<dbReference type="GO" id="GO:0008483">
    <property type="term" value="F:transaminase activity"/>
    <property type="evidence" value="ECO:0007669"/>
    <property type="project" value="UniProtKB-KW"/>
</dbReference>
<dbReference type="GO" id="GO:0019464">
    <property type="term" value="P:glycine decarboxylation via glycine cleavage system"/>
    <property type="evidence" value="ECO:0007669"/>
    <property type="project" value="UniProtKB-UniRule"/>
</dbReference>
<dbReference type="FunFam" id="2.40.30.110:FF:000003">
    <property type="entry name" value="Aminomethyltransferase"/>
    <property type="match status" value="1"/>
</dbReference>
<dbReference type="FunFam" id="3.30.70.1400:FF:000001">
    <property type="entry name" value="Aminomethyltransferase"/>
    <property type="match status" value="1"/>
</dbReference>
<dbReference type="FunFam" id="4.10.1250.10:FF:000001">
    <property type="entry name" value="Aminomethyltransferase"/>
    <property type="match status" value="1"/>
</dbReference>
<dbReference type="Gene3D" id="2.40.30.110">
    <property type="entry name" value="Aminomethyltransferase beta-barrel domains"/>
    <property type="match status" value="1"/>
</dbReference>
<dbReference type="Gene3D" id="3.30.70.1400">
    <property type="entry name" value="Aminomethyltransferase beta-barrel domains"/>
    <property type="match status" value="1"/>
</dbReference>
<dbReference type="Gene3D" id="4.10.1250.10">
    <property type="entry name" value="Aminomethyltransferase fragment"/>
    <property type="match status" value="1"/>
</dbReference>
<dbReference type="Gene3D" id="3.30.1360.120">
    <property type="entry name" value="Probable tRNA modification gtpase trme, domain 1"/>
    <property type="match status" value="1"/>
</dbReference>
<dbReference type="HAMAP" id="MF_00259">
    <property type="entry name" value="GcvT"/>
    <property type="match status" value="1"/>
</dbReference>
<dbReference type="InterPro" id="IPR006223">
    <property type="entry name" value="GCS_T"/>
</dbReference>
<dbReference type="InterPro" id="IPR022903">
    <property type="entry name" value="GCS_T_bac"/>
</dbReference>
<dbReference type="InterPro" id="IPR013977">
    <property type="entry name" value="GCST_C"/>
</dbReference>
<dbReference type="InterPro" id="IPR006222">
    <property type="entry name" value="GCV_T_N"/>
</dbReference>
<dbReference type="InterPro" id="IPR028896">
    <property type="entry name" value="GcvT/YgfZ/DmdA"/>
</dbReference>
<dbReference type="InterPro" id="IPR029043">
    <property type="entry name" value="GcvT/YgfZ_C"/>
</dbReference>
<dbReference type="InterPro" id="IPR027266">
    <property type="entry name" value="TrmE/GcvT_dom1"/>
</dbReference>
<dbReference type="NCBIfam" id="TIGR00528">
    <property type="entry name" value="gcvT"/>
    <property type="match status" value="1"/>
</dbReference>
<dbReference type="NCBIfam" id="NF001567">
    <property type="entry name" value="PRK00389.1"/>
    <property type="match status" value="1"/>
</dbReference>
<dbReference type="PANTHER" id="PTHR43757">
    <property type="entry name" value="AMINOMETHYLTRANSFERASE"/>
    <property type="match status" value="1"/>
</dbReference>
<dbReference type="PANTHER" id="PTHR43757:SF2">
    <property type="entry name" value="AMINOMETHYLTRANSFERASE, MITOCHONDRIAL"/>
    <property type="match status" value="1"/>
</dbReference>
<dbReference type="Pfam" id="PF01571">
    <property type="entry name" value="GCV_T"/>
    <property type="match status" value="1"/>
</dbReference>
<dbReference type="Pfam" id="PF08669">
    <property type="entry name" value="GCV_T_C"/>
    <property type="match status" value="1"/>
</dbReference>
<dbReference type="PIRSF" id="PIRSF006487">
    <property type="entry name" value="GcvT"/>
    <property type="match status" value="1"/>
</dbReference>
<dbReference type="SUPFAM" id="SSF101790">
    <property type="entry name" value="Aminomethyltransferase beta-barrel domain"/>
    <property type="match status" value="1"/>
</dbReference>
<dbReference type="SUPFAM" id="SSF103025">
    <property type="entry name" value="Folate-binding domain"/>
    <property type="match status" value="1"/>
</dbReference>
<organism>
    <name type="scientific">Bacillus subtilis (strain 168)</name>
    <dbReference type="NCBI Taxonomy" id="224308"/>
    <lineage>
        <taxon>Bacteria</taxon>
        <taxon>Bacillati</taxon>
        <taxon>Bacillota</taxon>
        <taxon>Bacilli</taxon>
        <taxon>Bacillales</taxon>
        <taxon>Bacillaceae</taxon>
        <taxon>Bacillus</taxon>
    </lineage>
</organism>
<sequence>MLKRTPLFDLYKEYGGKTIDFGGWELPVQFSSIKKEHEAVRTAAGLFDVSHMGEVEVSGNDSLSFLQRLMTNDVSALTPGRAQYTAMCYPDGGTVDDLLIYQKGENRYLLVINASNIDKDLAWMKEHAAGDVQIDNQSDQIALLAVQGPKAEAILKNLTDADVSALKPFAFIDEADISGRKALISRTGYTGEDGYEIYCRSDDAMHIWKKIIDAGDAYGLIPCGLGARDTLRFEAKLPLYGQELTRDITPIEAGIGFAVKHKKESDFFGKSVLSEQKENGAKRKLVGLEMIEKGIPRHGYEVFQNGKSVGKVTTGTQSPTLGKNVGLALIDSETSEIGTVVDVEIRKKLVKAKVVKTPFYKR</sequence>
<feature type="chain" id="PRO_0000122543" description="Aminomethyltransferase">
    <location>
        <begin position="1"/>
        <end position="362"/>
    </location>
</feature>
<feature type="sequence conflict" description="In Ref. 1; BAA12546." evidence="2" ref="1">
    <original>KL</original>
    <variation>NV</variation>
    <location>
        <begin position="236"/>
        <end position="237"/>
    </location>
</feature>
<feature type="helix" evidence="3">
    <location>
        <begin position="8"/>
        <end position="10"/>
    </location>
</feature>
<feature type="helix" evidence="3">
    <location>
        <begin position="11"/>
        <end position="14"/>
    </location>
</feature>
<feature type="strand" evidence="3">
    <location>
        <begin position="17"/>
        <end position="21"/>
    </location>
</feature>
<feature type="strand" evidence="3">
    <location>
        <begin position="24"/>
        <end position="31"/>
    </location>
</feature>
<feature type="helix" evidence="3">
    <location>
        <begin position="33"/>
        <end position="42"/>
    </location>
</feature>
<feature type="strand" evidence="3">
    <location>
        <begin position="43"/>
        <end position="48"/>
    </location>
</feature>
<feature type="strand" evidence="3">
    <location>
        <begin position="52"/>
        <end position="59"/>
    </location>
</feature>
<feature type="helix" evidence="3">
    <location>
        <begin position="62"/>
        <end position="69"/>
    </location>
</feature>
<feature type="strand" evidence="3">
    <location>
        <begin position="70"/>
        <end position="72"/>
    </location>
</feature>
<feature type="helix" evidence="3">
    <location>
        <begin position="74"/>
        <end position="76"/>
    </location>
</feature>
<feature type="strand" evidence="3">
    <location>
        <begin position="81"/>
        <end position="88"/>
    </location>
</feature>
<feature type="strand" evidence="3">
    <location>
        <begin position="94"/>
        <end position="104"/>
    </location>
</feature>
<feature type="strand" evidence="3">
    <location>
        <begin position="107"/>
        <end position="112"/>
    </location>
</feature>
<feature type="helix" evidence="3">
    <location>
        <begin position="114"/>
        <end position="116"/>
    </location>
</feature>
<feature type="helix" evidence="3">
    <location>
        <begin position="117"/>
        <end position="126"/>
    </location>
</feature>
<feature type="strand" evidence="3">
    <location>
        <begin position="133"/>
        <end position="136"/>
    </location>
</feature>
<feature type="turn" evidence="3">
    <location>
        <begin position="138"/>
        <end position="140"/>
    </location>
</feature>
<feature type="strand" evidence="3">
    <location>
        <begin position="141"/>
        <end position="148"/>
    </location>
</feature>
<feature type="helix" evidence="3">
    <location>
        <begin position="151"/>
        <end position="156"/>
    </location>
</feature>
<feature type="strand" evidence="3">
    <location>
        <begin position="159"/>
        <end position="161"/>
    </location>
</feature>
<feature type="helix" evidence="3">
    <location>
        <begin position="163"/>
        <end position="165"/>
    </location>
</feature>
<feature type="strand" evidence="3">
    <location>
        <begin position="170"/>
        <end position="177"/>
    </location>
</feature>
<feature type="strand" evidence="3">
    <location>
        <begin position="180"/>
        <end position="186"/>
    </location>
</feature>
<feature type="strand" evidence="3">
    <location>
        <begin position="189"/>
        <end position="200"/>
    </location>
</feature>
<feature type="helix" evidence="3">
    <location>
        <begin position="201"/>
        <end position="203"/>
    </location>
</feature>
<feature type="helix" evidence="3">
    <location>
        <begin position="204"/>
        <end position="215"/>
    </location>
</feature>
<feature type="helix" evidence="3">
    <location>
        <begin position="216"/>
        <end position="218"/>
    </location>
</feature>
<feature type="strand" evidence="3">
    <location>
        <begin position="220"/>
        <end position="223"/>
    </location>
</feature>
<feature type="helix" evidence="3">
    <location>
        <begin position="225"/>
        <end position="234"/>
    </location>
</feature>
<feature type="turn" evidence="3">
    <location>
        <begin position="240"/>
        <end position="242"/>
    </location>
</feature>
<feature type="strand" evidence="3">
    <location>
        <begin position="243"/>
        <end position="245"/>
    </location>
</feature>
<feature type="turn" evidence="3">
    <location>
        <begin position="250"/>
        <end position="254"/>
    </location>
</feature>
<feature type="helix" evidence="3">
    <location>
        <begin position="256"/>
        <end position="258"/>
    </location>
</feature>
<feature type="helix" evidence="3">
    <location>
        <begin position="270"/>
        <end position="279"/>
    </location>
</feature>
<feature type="strand" evidence="3">
    <location>
        <begin position="282"/>
        <end position="293"/>
    </location>
</feature>
<feature type="strand" evidence="3">
    <location>
        <begin position="301"/>
        <end position="304"/>
    </location>
</feature>
<feature type="strand" evidence="3">
    <location>
        <begin position="307"/>
        <end position="318"/>
    </location>
</feature>
<feature type="turn" evidence="3">
    <location>
        <begin position="319"/>
        <end position="322"/>
    </location>
</feature>
<feature type="strand" evidence="3">
    <location>
        <begin position="323"/>
        <end position="331"/>
    </location>
</feature>
<feature type="helix" evidence="3">
    <location>
        <begin position="332"/>
        <end position="334"/>
    </location>
</feature>
<feature type="strand" evidence="3">
    <location>
        <begin position="340"/>
        <end position="345"/>
    </location>
</feature>
<feature type="strand" evidence="3">
    <location>
        <begin position="348"/>
        <end position="355"/>
    </location>
</feature>
<keyword id="KW-0002">3D-structure</keyword>
<keyword id="KW-0032">Aminotransferase</keyword>
<keyword id="KW-1185">Reference proteome</keyword>
<keyword id="KW-0808">Transferase</keyword>